<evidence type="ECO:0000250" key="1">
    <source>
        <dbReference type="UniProtKB" id="P18618"/>
    </source>
</evidence>
<evidence type="ECO:0000250" key="2">
    <source>
        <dbReference type="UniProtKB" id="P21859"/>
    </source>
</evidence>
<evidence type="ECO:0000255" key="3">
    <source>
        <dbReference type="PROSITE-ProRule" id="PRU00068"/>
    </source>
</evidence>
<evidence type="ECO:0000269" key="4">
    <source>
    </source>
</evidence>
<evidence type="ECO:0000269" key="5">
    <source>
    </source>
</evidence>
<evidence type="ECO:0000303" key="6">
    <source>
    </source>
</evidence>
<evidence type="ECO:0000305" key="7"/>
<evidence type="ECO:0000305" key="8">
    <source>
    </source>
</evidence>
<comment type="function">
    <text evidence="1 4 5">Inhibits fibrinogen interaction with platelets. Acts by binding to alpha-IIb/beta-3 (ITGA2B/ITGB3) on the platelet surface and inhibits aggregation induced by ADP, thrombin, platelet-activating factor and collagen (By similarity). Inhibits cell adhesion to vitronectin, probably by blocking its receptor integrin alpha-V/beta-3 (ITGAV/ITGB3), and to fibronectin in vitro (PubMed:26163300, PubMed:27060015). Shows little to no cytotoxicity in vitro (PubMed:26163300, PubMed:27060015).</text>
</comment>
<comment type="subcellular location">
    <subcellularLocation>
        <location evidence="4">Secreted</location>
    </subcellularLocation>
</comment>
<comment type="tissue specificity">
    <text evidence="8">Expressed by the venom gland.</text>
</comment>
<comment type="miscellaneous">
    <text evidence="8">The disintegrin belongs to the medium disintegrin subfamily.</text>
</comment>
<comment type="similarity">
    <text evidence="7">Belongs to the venom metalloproteinase (M12B) family. P-II subfamily. P-IIa sub-subfamily.</text>
</comment>
<feature type="chain" id="PRO_0000437868" description="Disintegrin tzabcanin" evidence="8">
    <location>
        <begin position="1"/>
        <end position="71"/>
    </location>
</feature>
<feature type="domain" description="Disintegrin" evidence="3">
    <location>
        <begin position="1"/>
        <end position="71"/>
    </location>
</feature>
<feature type="short sequence motif" description="Cell attachment site" evidence="3">
    <location>
        <begin position="49"/>
        <end position="51"/>
    </location>
</feature>
<feature type="disulfide bond" evidence="2">
    <location>
        <begin position="4"/>
        <end position="19"/>
    </location>
</feature>
<feature type="disulfide bond" evidence="2">
    <location>
        <begin position="6"/>
        <end position="14"/>
    </location>
</feature>
<feature type="disulfide bond" evidence="2">
    <location>
        <begin position="13"/>
        <end position="36"/>
    </location>
</feature>
<feature type="disulfide bond" evidence="2">
    <location>
        <begin position="27"/>
        <end position="33"/>
    </location>
</feature>
<feature type="disulfide bond" evidence="2">
    <location>
        <begin position="32"/>
        <end position="57"/>
    </location>
</feature>
<feature type="disulfide bond" evidence="2 3">
    <location>
        <begin position="45"/>
        <end position="64"/>
    </location>
</feature>
<organism evidence="6">
    <name type="scientific">Crotalus tzabcan</name>
    <name type="common">Yucatan neotropical rattlesnake</name>
    <name type="synonym">Crotalus simus tzabcan</name>
    <dbReference type="NCBI Taxonomy" id="1043006"/>
    <lineage>
        <taxon>Eukaryota</taxon>
        <taxon>Metazoa</taxon>
        <taxon>Chordata</taxon>
        <taxon>Craniata</taxon>
        <taxon>Vertebrata</taxon>
        <taxon>Euteleostomi</taxon>
        <taxon>Lepidosauria</taxon>
        <taxon>Squamata</taxon>
        <taxon>Bifurcata</taxon>
        <taxon>Unidentata</taxon>
        <taxon>Episquamata</taxon>
        <taxon>Toxicofera</taxon>
        <taxon>Serpentes</taxon>
        <taxon>Colubroidea</taxon>
        <taxon>Viperidae</taxon>
        <taxon>Crotalinae</taxon>
        <taxon>Crotalus</taxon>
    </lineage>
</organism>
<name>VM2_CROTA</name>
<accession>C0HK50</accession>
<dbReference type="SMR" id="C0HK50"/>
<dbReference type="GO" id="GO:0005576">
    <property type="term" value="C:extracellular region"/>
    <property type="evidence" value="ECO:0007669"/>
    <property type="project" value="UniProtKB-SubCell"/>
</dbReference>
<dbReference type="GO" id="GO:0005886">
    <property type="term" value="C:plasma membrane"/>
    <property type="evidence" value="ECO:0007669"/>
    <property type="project" value="TreeGrafter"/>
</dbReference>
<dbReference type="GO" id="GO:0090729">
    <property type="term" value="F:toxin activity"/>
    <property type="evidence" value="ECO:0007669"/>
    <property type="project" value="UniProtKB-KW"/>
</dbReference>
<dbReference type="GO" id="GO:0007155">
    <property type="term" value="P:cell adhesion"/>
    <property type="evidence" value="ECO:0007669"/>
    <property type="project" value="UniProtKB-KW"/>
</dbReference>
<dbReference type="FunFam" id="4.10.70.10:FF:000005">
    <property type="entry name" value="Zinc metalloproteinase/disintegrin"/>
    <property type="match status" value="1"/>
</dbReference>
<dbReference type="Gene3D" id="4.10.70.10">
    <property type="entry name" value="Disintegrin domain"/>
    <property type="match status" value="1"/>
</dbReference>
<dbReference type="InterPro" id="IPR018358">
    <property type="entry name" value="Disintegrin_CS"/>
</dbReference>
<dbReference type="InterPro" id="IPR001762">
    <property type="entry name" value="Disintegrin_dom"/>
</dbReference>
<dbReference type="InterPro" id="IPR036436">
    <property type="entry name" value="Disintegrin_dom_sf"/>
</dbReference>
<dbReference type="PANTHER" id="PTHR11905">
    <property type="entry name" value="ADAM A DISINTEGRIN AND METALLOPROTEASE DOMAIN"/>
    <property type="match status" value="1"/>
</dbReference>
<dbReference type="PANTHER" id="PTHR11905:SF32">
    <property type="entry name" value="DISINTEGRIN AND METALLOPROTEINASE DOMAIN-CONTAINING PROTEIN 28"/>
    <property type="match status" value="1"/>
</dbReference>
<dbReference type="Pfam" id="PF00200">
    <property type="entry name" value="Disintegrin"/>
    <property type="match status" value="1"/>
</dbReference>
<dbReference type="PRINTS" id="PR00289">
    <property type="entry name" value="DISINTEGRIN"/>
</dbReference>
<dbReference type="SMART" id="SM00050">
    <property type="entry name" value="DISIN"/>
    <property type="match status" value="1"/>
</dbReference>
<dbReference type="SUPFAM" id="SSF57552">
    <property type="entry name" value="Blood coagulation inhibitor (disintegrin)"/>
    <property type="match status" value="1"/>
</dbReference>
<dbReference type="PROSITE" id="PS00427">
    <property type="entry name" value="DISINTEGRIN_1"/>
    <property type="match status" value="1"/>
</dbReference>
<dbReference type="PROSITE" id="PS50214">
    <property type="entry name" value="DISINTEGRIN_2"/>
    <property type="match status" value="1"/>
</dbReference>
<reference evidence="7" key="1">
    <citation type="journal article" date="2015" name="Biochimie">
        <title>Disintegrins of Crotalus simus tzabcan venom: Isolation, characterization and evaluation of the cytotoxic and anti-adhesion activities of tzabcanin, a new RGD disintegrin.</title>
        <authorList>
            <person name="Saviola A.J."/>
            <person name="Modahl C.M."/>
            <person name="Mackessy S.P."/>
        </authorList>
    </citation>
    <scope>NUCLEOTIDE SEQUENCE [MRNA]</scope>
    <scope>PROTEIN SEQUENCE OF 1-34</scope>
    <scope>FUNCTION</scope>
    <scope>SUBCELLULAR LOCATION</scope>
    <source>
        <tissue evidence="6">Venom</tissue>
    </source>
</reference>
<reference key="2">
    <citation type="journal article" date="2016" name="Int. J. Biol. Macromol.">
        <title>The disintegrin tzabcanin inhibits adhesion and migration in melanoma and lung cancer cells.</title>
        <authorList>
            <person name="Saviola A.J."/>
            <person name="Burns P.D."/>
            <person name="Mukherjee A.K."/>
            <person name="Mackessy S.P."/>
        </authorList>
    </citation>
    <scope>FUNCTION</scope>
</reference>
<sequence>GEECDCGSPANPCCDAATCKLRPGAQCADGLCCDQCRFIKKGTICRRARGDNPDDRCTGQSADCPRNHFHA</sequence>
<proteinExistence type="evidence at protein level"/>
<protein>
    <recommendedName>
        <fullName evidence="6">Disintegrin tzabcanin</fullName>
    </recommendedName>
</protein>
<keyword id="KW-0130">Cell adhesion</keyword>
<keyword id="KW-1217">Cell adhesion impairing toxin</keyword>
<keyword id="KW-0903">Direct protein sequencing</keyword>
<keyword id="KW-1015">Disulfide bond</keyword>
<keyword id="KW-1199">Hemostasis impairing toxin</keyword>
<keyword id="KW-1201">Platelet aggregation inhibiting toxin</keyword>
<keyword id="KW-0964">Secreted</keyword>
<keyword id="KW-0800">Toxin</keyword>